<proteinExistence type="inferred from homology"/>
<evidence type="ECO:0000255" key="1">
    <source>
        <dbReference type="HAMAP-Rule" id="MF_01604"/>
    </source>
</evidence>
<dbReference type="EC" id="2.7.1.89" evidence="1"/>
<dbReference type="EMBL" id="CP000802">
    <property type="protein sequence ID" value="ABV05568.1"/>
    <property type="molecule type" value="Genomic_DNA"/>
</dbReference>
<dbReference type="RefSeq" id="WP_001116565.1">
    <property type="nucleotide sequence ID" value="NC_009800.1"/>
</dbReference>
<dbReference type="SMR" id="A7ZZ64"/>
<dbReference type="KEGG" id="ecx:EcHS_A1229"/>
<dbReference type="HOGENOM" id="CLU_055115_2_1_6"/>
<dbReference type="UniPathway" id="UPA00060">
    <property type="reaction ID" value="UER00596"/>
</dbReference>
<dbReference type="GO" id="GO:0005524">
    <property type="term" value="F:ATP binding"/>
    <property type="evidence" value="ECO:0007669"/>
    <property type="project" value="UniProtKB-KW"/>
</dbReference>
<dbReference type="GO" id="GO:0019165">
    <property type="term" value="F:thiamine kinase activity"/>
    <property type="evidence" value="ECO:0007669"/>
    <property type="project" value="UniProtKB-UniRule"/>
</dbReference>
<dbReference type="GO" id="GO:0009229">
    <property type="term" value="P:thiamine diphosphate biosynthetic process"/>
    <property type="evidence" value="ECO:0007669"/>
    <property type="project" value="UniProtKB-UniRule"/>
</dbReference>
<dbReference type="GO" id="GO:0006772">
    <property type="term" value="P:thiamine metabolic process"/>
    <property type="evidence" value="ECO:0007669"/>
    <property type="project" value="InterPro"/>
</dbReference>
<dbReference type="FunFam" id="3.90.1200.10:FF:000004">
    <property type="entry name" value="Thiamine kinase"/>
    <property type="match status" value="1"/>
</dbReference>
<dbReference type="Gene3D" id="3.90.1200.10">
    <property type="match status" value="1"/>
</dbReference>
<dbReference type="HAMAP" id="MF_01604">
    <property type="entry name" value="Thiamine_kinase"/>
    <property type="match status" value="1"/>
</dbReference>
<dbReference type="InterPro" id="IPR002575">
    <property type="entry name" value="Aminoglycoside_PTrfase"/>
</dbReference>
<dbReference type="InterPro" id="IPR011009">
    <property type="entry name" value="Kinase-like_dom_sf"/>
</dbReference>
<dbReference type="InterPro" id="IPR014093">
    <property type="entry name" value="Thiamine_kinase"/>
</dbReference>
<dbReference type="NCBIfam" id="NF007620">
    <property type="entry name" value="PRK10271.1"/>
    <property type="match status" value="1"/>
</dbReference>
<dbReference type="NCBIfam" id="TIGR02721">
    <property type="entry name" value="ycfN_thiK"/>
    <property type="match status" value="1"/>
</dbReference>
<dbReference type="Pfam" id="PF01636">
    <property type="entry name" value="APH"/>
    <property type="match status" value="1"/>
</dbReference>
<dbReference type="SUPFAM" id="SSF56112">
    <property type="entry name" value="Protein kinase-like (PK-like)"/>
    <property type="match status" value="1"/>
</dbReference>
<organism>
    <name type="scientific">Escherichia coli O9:H4 (strain HS)</name>
    <dbReference type="NCBI Taxonomy" id="331112"/>
    <lineage>
        <taxon>Bacteria</taxon>
        <taxon>Pseudomonadati</taxon>
        <taxon>Pseudomonadota</taxon>
        <taxon>Gammaproteobacteria</taxon>
        <taxon>Enterobacterales</taxon>
        <taxon>Enterobacteriaceae</taxon>
        <taxon>Escherichia</taxon>
    </lineage>
</organism>
<accession>A7ZZ64</accession>
<feature type="chain" id="PRO_1000069407" description="Thiamine kinase">
    <location>
        <begin position="1"/>
        <end position="274"/>
    </location>
</feature>
<gene>
    <name evidence="1" type="primary">thiK</name>
    <name type="ordered locus">EcHS_A1229</name>
</gene>
<protein>
    <recommendedName>
        <fullName evidence="1">Thiamine kinase</fullName>
        <ecNumber evidence="1">2.7.1.89</ecNumber>
    </recommendedName>
</protein>
<keyword id="KW-0067">ATP-binding</keyword>
<keyword id="KW-0418">Kinase</keyword>
<keyword id="KW-0547">Nucleotide-binding</keyword>
<keyword id="KW-0808">Transferase</keyword>
<name>THIK_ECOHS</name>
<reference key="1">
    <citation type="journal article" date="2008" name="J. Bacteriol.">
        <title>The pangenome structure of Escherichia coli: comparative genomic analysis of E. coli commensal and pathogenic isolates.</title>
        <authorList>
            <person name="Rasko D.A."/>
            <person name="Rosovitz M.J."/>
            <person name="Myers G.S.A."/>
            <person name="Mongodin E.F."/>
            <person name="Fricke W.F."/>
            <person name="Gajer P."/>
            <person name="Crabtree J."/>
            <person name="Sebaihia M."/>
            <person name="Thomson N.R."/>
            <person name="Chaudhuri R."/>
            <person name="Henderson I.R."/>
            <person name="Sperandio V."/>
            <person name="Ravel J."/>
        </authorList>
    </citation>
    <scope>NUCLEOTIDE SEQUENCE [LARGE SCALE GENOMIC DNA]</scope>
    <source>
        <strain>HS</strain>
    </source>
</reference>
<sequence length="274" mass="32338">MPFRSNNPITRDELLSRFFPQFHPVTTFNSGLSGGSFLIEHQGQRFVVRQPHDPDAPQSAFLRQYRALSQLPACIAPKPHLYLRDWMVVDYLPGAVKTYLPDTNELAGLLYYLHQQPRFGWRITLLPLLELYWQQSDPARRTVGWLRMLKRLRKAREPRPLRLSPLHMDVHAGNLVHSASGLKLIDWEYAGDGDIALELAAVWVENTEQHLQLVNDYATRAKIYPAQLWRQVRRWFPWLLMLKAGWFEYRWRQTGDQQFIRLADDTWRQLLIKQ</sequence>
<comment type="function">
    <text evidence="1">Catalyzes the ATP-dependent phosphorylation of thiamine to thiamine phosphate. Is involved in thiamine salvage.</text>
</comment>
<comment type="catalytic activity">
    <reaction evidence="1">
        <text>thiamine + ATP = thiamine phosphate + ADP + H(+)</text>
        <dbReference type="Rhea" id="RHEA:12012"/>
        <dbReference type="ChEBI" id="CHEBI:15378"/>
        <dbReference type="ChEBI" id="CHEBI:18385"/>
        <dbReference type="ChEBI" id="CHEBI:30616"/>
        <dbReference type="ChEBI" id="CHEBI:37575"/>
        <dbReference type="ChEBI" id="CHEBI:456216"/>
        <dbReference type="EC" id="2.7.1.89"/>
    </reaction>
    <physiologicalReaction direction="left-to-right" evidence="1">
        <dbReference type="Rhea" id="RHEA:12013"/>
    </physiologicalReaction>
</comment>
<comment type="pathway">
    <text evidence="1">Cofactor biosynthesis; thiamine diphosphate biosynthesis; thiamine phosphate from thiamine: step 1/1.</text>
</comment>
<comment type="similarity">
    <text evidence="1">Belongs to the thiamine kinase family.</text>
</comment>